<comment type="function">
    <text evidence="1">Component of the origin recognition complex (ORC) that binds origins of replication. DNA-binding is ATP-dependent. The specific DNA sequences that define origins of replication have not been identified yet. ORC is required to assemble the pre-replication complex necessary to initiate DNA replication.</text>
</comment>
<comment type="subunit">
    <text evidence="5 6">Component of the origin recognition complex (ORC) composed of at least ORC1 (ORC1A or ORC1B), ORC2, ORC3, ORC4, ORC5 and ORC6. ORC is regulated in a cell-cycle and development dependent manner. It is sequentially assembled at the exit from anaphase of mitosis and disassembled as cells enter S phase. Interacts directly with ORC1A, ORC1B, ORC2, ORC3, ORC4 and ORC6.</text>
</comment>
<comment type="interaction">
    <interactant intactId="EBI-2114109">
        <id>Q6EWX0</id>
    </interactant>
    <interactant intactId="EBI-2114089">
        <id>Q38899</id>
        <label>ORC2</label>
    </interactant>
    <organismsDiffer>false</organismsDiffer>
    <experiments>2</experiments>
</comment>
<comment type="interaction">
    <interactant intactId="EBI-2114109">
        <id>Q6EWX0</id>
    </interactant>
    <interactant intactId="EBI-2114176">
        <id>Q6EWX1</id>
        <label>ORC4</label>
    </interactant>
    <organismsDiffer>false</organismsDiffer>
    <experiments>2</experiments>
</comment>
<comment type="interaction">
    <interactant intactId="EBI-2114109">
        <id>Q6EWX0</id>
    </interactant>
    <interactant intactId="EBI-2114077">
        <id>Q9ZVH3</id>
        <label>ORC6</label>
    </interactant>
    <organismsDiffer>false</organismsDiffer>
    <experiments>2</experiments>
</comment>
<comment type="subcellular location">
    <subcellularLocation>
        <location evidence="1">Nucleus</location>
    </subcellularLocation>
</comment>
<comment type="tissue specificity">
    <text evidence="5 6">Follow a cell-cycle regulation with a peak at the G1/S-phase (PubMed:16179646). Mostly expressed in flower buds and cauline leaves, and, to a lower exent, in roots, leaves and stems (PubMed:16179646). Expressed at low levels ubiquitously (PubMed:15358564).</text>
</comment>
<comment type="induction">
    <text evidence="5 6">Accumulates 13 hours after cell cycle reactivation by sucrose addition following cell cycle arrest mediated by sucrose deprivation.</text>
</comment>
<comment type="similarity">
    <text evidence="8">Belongs to the ORC5 family.</text>
</comment>
<comment type="sequence caution" evidence="8">
    <conflict type="erroneous gene model prediction">
        <sequence resource="EMBL-CDS" id="CAB43666"/>
    </conflict>
</comment>
<comment type="sequence caution" evidence="8">
    <conflict type="erroneous gene model prediction">
        <sequence resource="EMBL-CDS" id="CAB79749"/>
    </conflict>
</comment>
<proteinExistence type="evidence at protein level"/>
<gene>
    <name evidence="7" type="primary">ORC5</name>
    <name evidence="9" type="ordered locus">At4g29910</name>
    <name evidence="10" type="ORF">F27B13.150</name>
</gene>
<dbReference type="EMBL" id="AJ575583">
    <property type="protein sequence ID" value="CAE01429.1"/>
    <property type="molecule type" value="mRNA"/>
</dbReference>
<dbReference type="EMBL" id="AL050352">
    <property type="protein sequence ID" value="CAB43666.1"/>
    <property type="status" value="ALT_SEQ"/>
    <property type="molecule type" value="Genomic_DNA"/>
</dbReference>
<dbReference type="EMBL" id="AL161575">
    <property type="protein sequence ID" value="CAB79749.1"/>
    <property type="status" value="ALT_SEQ"/>
    <property type="molecule type" value="Genomic_DNA"/>
</dbReference>
<dbReference type="EMBL" id="CP002687">
    <property type="protein sequence ID" value="AEE85692.1"/>
    <property type="molecule type" value="Genomic_DNA"/>
</dbReference>
<dbReference type="EMBL" id="AK226860">
    <property type="protein sequence ID" value="BAE98949.1"/>
    <property type="molecule type" value="mRNA"/>
</dbReference>
<dbReference type="PIR" id="T08552">
    <property type="entry name" value="T08552"/>
</dbReference>
<dbReference type="RefSeq" id="NP_194720.2">
    <property type="nucleotide sequence ID" value="NM_119137.5"/>
</dbReference>
<dbReference type="SMR" id="Q6EWX0"/>
<dbReference type="FunCoup" id="Q6EWX0">
    <property type="interactions" value="4180"/>
</dbReference>
<dbReference type="IntAct" id="Q6EWX0">
    <property type="interactions" value="5"/>
</dbReference>
<dbReference type="STRING" id="3702.Q6EWX0"/>
<dbReference type="iPTMnet" id="Q6EWX0"/>
<dbReference type="PaxDb" id="3702-AT4G29910.1"/>
<dbReference type="ProteomicsDB" id="248771"/>
<dbReference type="EnsemblPlants" id="AT4G29910.1">
    <property type="protein sequence ID" value="AT4G29910.1"/>
    <property type="gene ID" value="AT4G29910"/>
</dbReference>
<dbReference type="GeneID" id="829114"/>
<dbReference type="Gramene" id="AT4G29910.1">
    <property type="protein sequence ID" value="AT4G29910.1"/>
    <property type="gene ID" value="AT4G29910"/>
</dbReference>
<dbReference type="KEGG" id="ath:AT4G29910"/>
<dbReference type="Araport" id="AT4G29910"/>
<dbReference type="TAIR" id="AT4G29910">
    <property type="gene designation" value="ORC5"/>
</dbReference>
<dbReference type="eggNOG" id="KOG2543">
    <property type="taxonomic scope" value="Eukaryota"/>
</dbReference>
<dbReference type="HOGENOM" id="CLU_028223_1_0_1"/>
<dbReference type="InParanoid" id="Q6EWX0"/>
<dbReference type="OMA" id="QLRRWHG"/>
<dbReference type="PhylomeDB" id="Q6EWX0"/>
<dbReference type="PRO" id="PR:Q6EWX0"/>
<dbReference type="Proteomes" id="UP000006548">
    <property type="component" value="Chromosome 4"/>
</dbReference>
<dbReference type="ExpressionAtlas" id="Q6EWX0">
    <property type="expression patterns" value="baseline and differential"/>
</dbReference>
<dbReference type="GO" id="GO:0005634">
    <property type="term" value="C:nucleus"/>
    <property type="evidence" value="ECO:0007669"/>
    <property type="project" value="UniProtKB-SubCell"/>
</dbReference>
<dbReference type="GO" id="GO:0000808">
    <property type="term" value="C:origin recognition complex"/>
    <property type="evidence" value="ECO:0000250"/>
    <property type="project" value="TAIR"/>
</dbReference>
<dbReference type="GO" id="GO:0005524">
    <property type="term" value="F:ATP binding"/>
    <property type="evidence" value="ECO:0007669"/>
    <property type="project" value="UniProtKB-KW"/>
</dbReference>
<dbReference type="GO" id="GO:0006260">
    <property type="term" value="P:DNA replication"/>
    <property type="evidence" value="ECO:0000250"/>
    <property type="project" value="TAIR"/>
</dbReference>
<dbReference type="FunFam" id="3.40.50.300:FF:002310">
    <property type="entry name" value="Origin of replication complex subunit 5"/>
    <property type="match status" value="1"/>
</dbReference>
<dbReference type="Gene3D" id="3.40.50.300">
    <property type="entry name" value="P-loop containing nucleotide triphosphate hydrolases"/>
    <property type="match status" value="1"/>
</dbReference>
<dbReference type="InterPro" id="IPR041664">
    <property type="entry name" value="AAA_16"/>
</dbReference>
<dbReference type="InterPro" id="IPR020796">
    <property type="entry name" value="ORC5"/>
</dbReference>
<dbReference type="InterPro" id="IPR047088">
    <property type="entry name" value="ORC5_C"/>
</dbReference>
<dbReference type="InterPro" id="IPR048866">
    <property type="entry name" value="ORC5_lid"/>
</dbReference>
<dbReference type="InterPro" id="IPR027417">
    <property type="entry name" value="P-loop_NTPase"/>
</dbReference>
<dbReference type="PANTHER" id="PTHR12705">
    <property type="entry name" value="ORIGIN RECOGNITION COMPLEX SUBUNIT 5"/>
    <property type="match status" value="1"/>
</dbReference>
<dbReference type="PANTHER" id="PTHR12705:SF0">
    <property type="entry name" value="ORIGIN RECOGNITION COMPLEX SUBUNIT 5"/>
    <property type="match status" value="1"/>
</dbReference>
<dbReference type="Pfam" id="PF13191">
    <property type="entry name" value="AAA_16"/>
    <property type="match status" value="1"/>
</dbReference>
<dbReference type="Pfam" id="PF14630">
    <property type="entry name" value="ORC5_C"/>
    <property type="match status" value="1"/>
</dbReference>
<dbReference type="Pfam" id="PF21639">
    <property type="entry name" value="ORC5_lid"/>
    <property type="match status" value="1"/>
</dbReference>
<dbReference type="SUPFAM" id="SSF52540">
    <property type="entry name" value="P-loop containing nucleoside triphosphate hydrolases"/>
    <property type="match status" value="1"/>
</dbReference>
<keyword id="KW-0067">ATP-binding</keyword>
<keyword id="KW-0235">DNA replication</keyword>
<keyword id="KW-0547">Nucleotide-binding</keyword>
<keyword id="KW-0539">Nucleus</keyword>
<keyword id="KW-1185">Reference proteome</keyword>
<reference key="1">
    <citation type="submission" date="2003-07" db="EMBL/GenBank/DDBJ databases">
        <title>Organization of Arabidopsis origin recognition complex genes.</title>
        <authorList>
            <person name="Diaz-Trivino S."/>
            <person name="Castellano M.M."/>
            <person name="Gutierrez C."/>
        </authorList>
    </citation>
    <scope>NUCLEOTIDE SEQUENCE [MRNA]</scope>
</reference>
<reference key="2">
    <citation type="journal article" date="1999" name="Nature">
        <title>Sequence and analysis of chromosome 4 of the plant Arabidopsis thaliana.</title>
        <authorList>
            <person name="Mayer K.F.X."/>
            <person name="Schueller C."/>
            <person name="Wambutt R."/>
            <person name="Murphy G."/>
            <person name="Volckaert G."/>
            <person name="Pohl T."/>
            <person name="Duesterhoeft A."/>
            <person name="Stiekema W."/>
            <person name="Entian K.-D."/>
            <person name="Terryn N."/>
            <person name="Harris B."/>
            <person name="Ansorge W."/>
            <person name="Brandt P."/>
            <person name="Grivell L.A."/>
            <person name="Rieger M."/>
            <person name="Weichselgartner M."/>
            <person name="de Simone V."/>
            <person name="Obermaier B."/>
            <person name="Mache R."/>
            <person name="Mueller M."/>
            <person name="Kreis M."/>
            <person name="Delseny M."/>
            <person name="Puigdomenech P."/>
            <person name="Watson M."/>
            <person name="Schmidtheini T."/>
            <person name="Reichert B."/>
            <person name="Portetelle D."/>
            <person name="Perez-Alonso M."/>
            <person name="Boutry M."/>
            <person name="Bancroft I."/>
            <person name="Vos P."/>
            <person name="Hoheisel J."/>
            <person name="Zimmermann W."/>
            <person name="Wedler H."/>
            <person name="Ridley P."/>
            <person name="Langham S.-A."/>
            <person name="McCullagh B."/>
            <person name="Bilham L."/>
            <person name="Robben J."/>
            <person name="van der Schueren J."/>
            <person name="Grymonprez B."/>
            <person name="Chuang Y.-J."/>
            <person name="Vandenbussche F."/>
            <person name="Braeken M."/>
            <person name="Weltjens I."/>
            <person name="Voet M."/>
            <person name="Bastiaens I."/>
            <person name="Aert R."/>
            <person name="Defoor E."/>
            <person name="Weitzenegger T."/>
            <person name="Bothe G."/>
            <person name="Ramsperger U."/>
            <person name="Hilbert H."/>
            <person name="Braun M."/>
            <person name="Holzer E."/>
            <person name="Brandt A."/>
            <person name="Peters S."/>
            <person name="van Staveren M."/>
            <person name="Dirkse W."/>
            <person name="Mooijman P."/>
            <person name="Klein Lankhorst R."/>
            <person name="Rose M."/>
            <person name="Hauf J."/>
            <person name="Koetter P."/>
            <person name="Berneiser S."/>
            <person name="Hempel S."/>
            <person name="Feldpausch M."/>
            <person name="Lamberth S."/>
            <person name="Van den Daele H."/>
            <person name="De Keyser A."/>
            <person name="Buysshaert C."/>
            <person name="Gielen J."/>
            <person name="Villarroel R."/>
            <person name="De Clercq R."/>
            <person name="van Montagu M."/>
            <person name="Rogers J."/>
            <person name="Cronin A."/>
            <person name="Quail M.A."/>
            <person name="Bray-Allen S."/>
            <person name="Clark L."/>
            <person name="Doggett J."/>
            <person name="Hall S."/>
            <person name="Kay M."/>
            <person name="Lennard N."/>
            <person name="McLay K."/>
            <person name="Mayes R."/>
            <person name="Pettett A."/>
            <person name="Rajandream M.A."/>
            <person name="Lyne M."/>
            <person name="Benes V."/>
            <person name="Rechmann S."/>
            <person name="Borkova D."/>
            <person name="Bloecker H."/>
            <person name="Scharfe M."/>
            <person name="Grimm M."/>
            <person name="Loehnert T.-H."/>
            <person name="Dose S."/>
            <person name="de Haan M."/>
            <person name="Maarse A.C."/>
            <person name="Schaefer M."/>
            <person name="Mueller-Auer S."/>
            <person name="Gabel C."/>
            <person name="Fuchs M."/>
            <person name="Fartmann B."/>
            <person name="Granderath K."/>
            <person name="Dauner D."/>
            <person name="Herzl A."/>
            <person name="Neumann S."/>
            <person name="Argiriou A."/>
            <person name="Vitale D."/>
            <person name="Liguori R."/>
            <person name="Piravandi E."/>
            <person name="Massenet O."/>
            <person name="Quigley F."/>
            <person name="Clabauld G."/>
            <person name="Muendlein A."/>
            <person name="Felber R."/>
            <person name="Schnabl S."/>
            <person name="Hiller R."/>
            <person name="Schmidt W."/>
            <person name="Lecharny A."/>
            <person name="Aubourg S."/>
            <person name="Chefdor F."/>
            <person name="Cooke R."/>
            <person name="Berger C."/>
            <person name="Monfort A."/>
            <person name="Casacuberta E."/>
            <person name="Gibbons T."/>
            <person name="Weber N."/>
            <person name="Vandenbol M."/>
            <person name="Bargues M."/>
            <person name="Terol J."/>
            <person name="Torres A."/>
            <person name="Perez-Perez A."/>
            <person name="Purnelle B."/>
            <person name="Bent E."/>
            <person name="Johnson S."/>
            <person name="Tacon D."/>
            <person name="Jesse T."/>
            <person name="Heijnen L."/>
            <person name="Schwarz S."/>
            <person name="Scholler P."/>
            <person name="Heber S."/>
            <person name="Francs P."/>
            <person name="Bielke C."/>
            <person name="Frishman D."/>
            <person name="Haase D."/>
            <person name="Lemcke K."/>
            <person name="Mewes H.-W."/>
            <person name="Stocker S."/>
            <person name="Zaccaria P."/>
            <person name="Bevan M."/>
            <person name="Wilson R.K."/>
            <person name="de la Bastide M."/>
            <person name="Habermann K."/>
            <person name="Parnell L."/>
            <person name="Dedhia N."/>
            <person name="Gnoj L."/>
            <person name="Schutz K."/>
            <person name="Huang E."/>
            <person name="Spiegel L."/>
            <person name="Sekhon M."/>
            <person name="Murray J."/>
            <person name="Sheet P."/>
            <person name="Cordes M."/>
            <person name="Abu-Threideh J."/>
            <person name="Stoneking T."/>
            <person name="Kalicki J."/>
            <person name="Graves T."/>
            <person name="Harmon G."/>
            <person name="Edwards J."/>
            <person name="Latreille P."/>
            <person name="Courtney L."/>
            <person name="Cloud J."/>
            <person name="Abbott A."/>
            <person name="Scott K."/>
            <person name="Johnson D."/>
            <person name="Minx P."/>
            <person name="Bentley D."/>
            <person name="Fulton B."/>
            <person name="Miller N."/>
            <person name="Greco T."/>
            <person name="Kemp K."/>
            <person name="Kramer J."/>
            <person name="Fulton L."/>
            <person name="Mardis E."/>
            <person name="Dante M."/>
            <person name="Pepin K."/>
            <person name="Hillier L.W."/>
            <person name="Nelson J."/>
            <person name="Spieth J."/>
            <person name="Ryan E."/>
            <person name="Andrews S."/>
            <person name="Geisel C."/>
            <person name="Layman D."/>
            <person name="Du H."/>
            <person name="Ali J."/>
            <person name="Berghoff A."/>
            <person name="Jones K."/>
            <person name="Drone K."/>
            <person name="Cotton M."/>
            <person name="Joshu C."/>
            <person name="Antonoiu B."/>
            <person name="Zidanic M."/>
            <person name="Strong C."/>
            <person name="Sun H."/>
            <person name="Lamar B."/>
            <person name="Yordan C."/>
            <person name="Ma P."/>
            <person name="Zhong J."/>
            <person name="Preston R."/>
            <person name="Vil D."/>
            <person name="Shekher M."/>
            <person name="Matero A."/>
            <person name="Shah R."/>
            <person name="Swaby I.K."/>
            <person name="O'Shaughnessy A."/>
            <person name="Rodriguez M."/>
            <person name="Hoffman J."/>
            <person name="Till S."/>
            <person name="Granat S."/>
            <person name="Shohdy N."/>
            <person name="Hasegawa A."/>
            <person name="Hameed A."/>
            <person name="Lodhi M."/>
            <person name="Johnson A."/>
            <person name="Chen E."/>
            <person name="Marra M.A."/>
            <person name="Martienssen R."/>
            <person name="McCombie W.R."/>
        </authorList>
    </citation>
    <scope>NUCLEOTIDE SEQUENCE [LARGE SCALE GENOMIC DNA]</scope>
    <source>
        <strain>cv. Columbia</strain>
    </source>
</reference>
<reference key="3">
    <citation type="journal article" date="2017" name="Plant J.">
        <title>Araport11: a complete reannotation of the Arabidopsis thaliana reference genome.</title>
        <authorList>
            <person name="Cheng C.Y."/>
            <person name="Krishnakumar V."/>
            <person name="Chan A.P."/>
            <person name="Thibaud-Nissen F."/>
            <person name="Schobel S."/>
            <person name="Town C.D."/>
        </authorList>
    </citation>
    <scope>GENOME REANNOTATION</scope>
    <source>
        <strain>cv. Columbia</strain>
    </source>
</reference>
<reference key="4">
    <citation type="submission" date="2006-07" db="EMBL/GenBank/DDBJ databases">
        <title>Large-scale analysis of RIKEN Arabidopsis full-length (RAFL) cDNAs.</title>
        <authorList>
            <person name="Totoki Y."/>
            <person name="Seki M."/>
            <person name="Ishida J."/>
            <person name="Nakajima M."/>
            <person name="Enju A."/>
            <person name="Kamiya A."/>
            <person name="Narusaka M."/>
            <person name="Shin-i T."/>
            <person name="Nakagawa M."/>
            <person name="Sakamoto N."/>
            <person name="Oishi K."/>
            <person name="Kohara Y."/>
            <person name="Kobayashi M."/>
            <person name="Toyoda A."/>
            <person name="Sakaki Y."/>
            <person name="Sakurai T."/>
            <person name="Iida K."/>
            <person name="Akiyama K."/>
            <person name="Satou M."/>
            <person name="Toyoda T."/>
            <person name="Konagaya A."/>
            <person name="Carninci P."/>
            <person name="Kawai J."/>
            <person name="Hayashizaki Y."/>
            <person name="Shinozaki K."/>
        </authorList>
    </citation>
    <scope>NUCLEOTIDE SEQUENCE [LARGE SCALE MRNA]</scope>
    <source>
        <strain>cv. Columbia</strain>
    </source>
</reference>
<reference key="5">
    <citation type="journal article" date="2004" name="FEBS Lett.">
        <title>Genome based identification and analysis of the pre-replicative complex of Arabidopsis thaliana.</title>
        <authorList>
            <person name="Masuda H.P."/>
            <person name="Ramos G.B.A."/>
            <person name="de Almeida-Engler J."/>
            <person name="Cabral L.M."/>
            <person name="Coqueiro V.M."/>
            <person name="Macrini C.M.T."/>
            <person name="Ferreira P.C.G."/>
            <person name="Hemerly A.S."/>
        </authorList>
    </citation>
    <scope>SUBUNIT</scope>
    <scope>INTERACTION WITH ORC3</scope>
    <scope>TISSUE SPECIFICITY</scope>
    <scope>INDUCTION BY SUCROSE</scope>
    <scope>GENE FAMILY</scope>
    <source>
        <strain>cv. Columbia</strain>
    </source>
</reference>
<reference key="6">
    <citation type="journal article" date="2005" name="Nucleic Acids Res.">
        <title>The genes encoding Arabidopsis ORC subunits are E2F targets and the two ORC1 genes are differently expressed in proliferating and endoreplicating cells.</title>
        <authorList>
            <person name="Diaz-Trivino S."/>
            <person name="Castellano M.M."/>
            <person name="Sanchez M.P."/>
            <person name="Ramirez-Parra E."/>
            <person name="Desvoyes B."/>
            <person name="Gutierrez C."/>
        </authorList>
    </citation>
    <scope>SUBUNIT</scope>
    <scope>INTERACTION WITH ORC1A; ORC1B; ORC2; ORC3; ORC4 AND ORC6</scope>
    <scope>TISSUE SPECIFICITY</scope>
    <scope>INDUCTION BY SUCROSE</scope>
    <scope>GENE FAMILY</scope>
    <scope>NOMENCLATURE</scope>
</reference>
<reference key="7">
    <citation type="journal article" date="2007" name="Plant Physiol.">
        <title>Genome-wide analysis of the core DNA replication machinery in the higher plants Arabidopsis and rice.</title>
        <authorList>
            <person name="Shultz R.W."/>
            <person name="Tatineni V.M."/>
            <person name="Hanley-Bowdoin L."/>
            <person name="Thompson W.F."/>
        </authorList>
    </citation>
    <scope>REVIEW ON THE CORE DNA REPLICATION MACHINERY</scope>
</reference>
<sequence length="534" mass="60638">MPPKEESSKVTRRSTRSSASVTVENSEPIESHTPTIDDLTFGEESITIDAVLSNFPGRRSQIFDFIRLMGPLDCPTLPIMIYGGASTGKTSVVLQVLRHLNRPFVYSSCRTCYNPRILFESILNQSLLHRKCSLNGYSSAKRCDKPSDFVNLLREALSSVIKTLESTSETSRSDKPDEKPMGKMVYLILDNVDLIRDWDKGTIILQFLFSLYTVLKMPQLGIILISGLPPDVYYSNMGYTDPIPLYFPEYSEEDLRQIFLRNQPNRKLYSAFLDVVLKPFCRVTRRVEELSTTFSLLFRKFCEPLDDLGISPNEDMKRRLYSHLKPLIAHCLNEIFRVSSHPHDGETRGERRQKASYSSENREELEILDFHMSTSAKFLLLSAFLASRNPATLDASMFDSTGGMDNRKRKRKASEKSMEKKEIAEQEAVMKGPGSFPLERLLAIFQCIASVGDSSFGEEDEEEENTTGYDKENNNLMSDILLQVSSLCDANFLIKSGSCPLEGSIRYRSMVSEDLAQKVAKSLSFPLSKYLYRR</sequence>
<name>ORC5_ARATH</name>
<organism evidence="11">
    <name type="scientific">Arabidopsis thaliana</name>
    <name type="common">Mouse-ear cress</name>
    <dbReference type="NCBI Taxonomy" id="3702"/>
    <lineage>
        <taxon>Eukaryota</taxon>
        <taxon>Viridiplantae</taxon>
        <taxon>Streptophyta</taxon>
        <taxon>Embryophyta</taxon>
        <taxon>Tracheophyta</taxon>
        <taxon>Spermatophyta</taxon>
        <taxon>Magnoliopsida</taxon>
        <taxon>eudicotyledons</taxon>
        <taxon>Gunneridae</taxon>
        <taxon>Pentapetalae</taxon>
        <taxon>rosids</taxon>
        <taxon>malvids</taxon>
        <taxon>Brassicales</taxon>
        <taxon>Brassicaceae</taxon>
        <taxon>Camelineae</taxon>
        <taxon>Arabidopsis</taxon>
    </lineage>
</organism>
<evidence type="ECO:0000250" key="1">
    <source>
        <dbReference type="UniProtKB" id="O43913"/>
    </source>
</evidence>
<evidence type="ECO:0000255" key="2"/>
<evidence type="ECO:0000255" key="3">
    <source>
        <dbReference type="PROSITE-ProRule" id="PRU00768"/>
    </source>
</evidence>
<evidence type="ECO:0000256" key="4">
    <source>
        <dbReference type="SAM" id="MobiDB-lite"/>
    </source>
</evidence>
<evidence type="ECO:0000269" key="5">
    <source>
    </source>
</evidence>
<evidence type="ECO:0000269" key="6">
    <source>
    </source>
</evidence>
<evidence type="ECO:0000303" key="7">
    <source>
    </source>
</evidence>
<evidence type="ECO:0000305" key="8"/>
<evidence type="ECO:0000312" key="9">
    <source>
        <dbReference type="Araport" id="AT4G29910"/>
    </source>
</evidence>
<evidence type="ECO:0000312" key="10">
    <source>
        <dbReference type="EMBL" id="CAB43666.1"/>
    </source>
</evidence>
<evidence type="ECO:0000312" key="11">
    <source>
        <dbReference type="EMBL" id="CAE01429.1"/>
    </source>
</evidence>
<accession>Q6EWX0</accession>
<accession>Q9SZR2</accession>
<feature type="chain" id="PRO_0000431435" description="Origin of replication complex subunit 5">
    <location>
        <begin position="1"/>
        <end position="534"/>
    </location>
</feature>
<feature type="region of interest" description="Disordered" evidence="4">
    <location>
        <begin position="1"/>
        <end position="36"/>
    </location>
</feature>
<feature type="region of interest" description="Disordered" evidence="4">
    <location>
        <begin position="397"/>
        <end position="428"/>
    </location>
</feature>
<feature type="short sequence motif" description="Nuclear localization signal" evidence="3">
    <location>
        <begin position="129"/>
        <end position="136"/>
    </location>
</feature>
<feature type="compositionally biased region" description="Basic and acidic residues" evidence="4">
    <location>
        <begin position="414"/>
        <end position="424"/>
    </location>
</feature>
<feature type="binding site" evidence="2">
    <location>
        <begin position="83"/>
        <end position="90"/>
    </location>
    <ligand>
        <name>ATP</name>
        <dbReference type="ChEBI" id="CHEBI:30616"/>
    </ligand>
</feature>
<protein>
    <recommendedName>
        <fullName evidence="7">Origin of replication complex subunit 5</fullName>
        <shortName evidence="7">AtORC5</shortName>
    </recommendedName>
</protein>